<name>THIG_GLOVI</name>
<evidence type="ECO:0000255" key="1">
    <source>
        <dbReference type="HAMAP-Rule" id="MF_00443"/>
    </source>
</evidence>
<dbReference type="EC" id="2.8.1.10" evidence="1"/>
<dbReference type="EMBL" id="BA000045">
    <property type="protein sequence ID" value="BAC89748.1"/>
    <property type="molecule type" value="Genomic_DNA"/>
</dbReference>
<dbReference type="RefSeq" id="NP_924753.1">
    <property type="nucleotide sequence ID" value="NC_005125.1"/>
</dbReference>
<dbReference type="RefSeq" id="WP_011141805.1">
    <property type="nucleotide sequence ID" value="NC_005125.1"/>
</dbReference>
<dbReference type="SMR" id="Q7NJM5"/>
<dbReference type="FunCoup" id="Q7NJM5">
    <property type="interactions" value="97"/>
</dbReference>
<dbReference type="STRING" id="251221.gene:10759299"/>
<dbReference type="EnsemblBacteria" id="BAC89748">
    <property type="protein sequence ID" value="BAC89748"/>
    <property type="gene ID" value="BAC89748"/>
</dbReference>
<dbReference type="KEGG" id="gvi:gll1807"/>
<dbReference type="PATRIC" id="fig|251221.4.peg.1841"/>
<dbReference type="eggNOG" id="COG2022">
    <property type="taxonomic scope" value="Bacteria"/>
</dbReference>
<dbReference type="HOGENOM" id="CLU_062233_1_0_3"/>
<dbReference type="InParanoid" id="Q7NJM5"/>
<dbReference type="OrthoDB" id="9805935at2"/>
<dbReference type="PhylomeDB" id="Q7NJM5"/>
<dbReference type="UniPathway" id="UPA00060"/>
<dbReference type="Proteomes" id="UP000000557">
    <property type="component" value="Chromosome"/>
</dbReference>
<dbReference type="GO" id="GO:1902508">
    <property type="term" value="C:2-iminoacetate synthase complex"/>
    <property type="evidence" value="ECO:0000318"/>
    <property type="project" value="GO_Central"/>
</dbReference>
<dbReference type="GO" id="GO:0005737">
    <property type="term" value="C:cytoplasm"/>
    <property type="evidence" value="ECO:0007669"/>
    <property type="project" value="UniProtKB-SubCell"/>
</dbReference>
<dbReference type="GO" id="GO:1990107">
    <property type="term" value="F:thiazole synthase activity"/>
    <property type="evidence" value="ECO:0007669"/>
    <property type="project" value="UniProtKB-EC"/>
</dbReference>
<dbReference type="GO" id="GO:0009228">
    <property type="term" value="P:thiamine biosynthetic process"/>
    <property type="evidence" value="ECO:0000318"/>
    <property type="project" value="GO_Central"/>
</dbReference>
<dbReference type="GO" id="GO:0009229">
    <property type="term" value="P:thiamine diphosphate biosynthetic process"/>
    <property type="evidence" value="ECO:0000318"/>
    <property type="project" value="GO_Central"/>
</dbReference>
<dbReference type="CDD" id="cd04728">
    <property type="entry name" value="ThiG"/>
    <property type="match status" value="1"/>
</dbReference>
<dbReference type="Gene3D" id="3.20.20.70">
    <property type="entry name" value="Aldolase class I"/>
    <property type="match status" value="1"/>
</dbReference>
<dbReference type="HAMAP" id="MF_00443">
    <property type="entry name" value="ThiG"/>
    <property type="match status" value="1"/>
</dbReference>
<dbReference type="InterPro" id="IPR013785">
    <property type="entry name" value="Aldolase_TIM"/>
</dbReference>
<dbReference type="InterPro" id="IPR033983">
    <property type="entry name" value="Thiazole_synthase_ThiG"/>
</dbReference>
<dbReference type="InterPro" id="IPR008867">
    <property type="entry name" value="ThiG"/>
</dbReference>
<dbReference type="PANTHER" id="PTHR34266">
    <property type="entry name" value="THIAZOLE SYNTHASE"/>
    <property type="match status" value="1"/>
</dbReference>
<dbReference type="PANTHER" id="PTHR34266:SF2">
    <property type="entry name" value="THIAZOLE SYNTHASE"/>
    <property type="match status" value="1"/>
</dbReference>
<dbReference type="Pfam" id="PF05690">
    <property type="entry name" value="ThiG"/>
    <property type="match status" value="1"/>
</dbReference>
<dbReference type="SUPFAM" id="SSF110399">
    <property type="entry name" value="ThiG-like"/>
    <property type="match status" value="1"/>
</dbReference>
<gene>
    <name evidence="1" type="primary">thiG</name>
    <name type="ordered locus">gll1807</name>
</gene>
<keyword id="KW-0963">Cytoplasm</keyword>
<keyword id="KW-1185">Reference proteome</keyword>
<keyword id="KW-0704">Schiff base</keyword>
<keyword id="KW-0784">Thiamine biosynthesis</keyword>
<keyword id="KW-0808">Transferase</keyword>
<feature type="chain" id="PRO_0000162824" description="Thiazole synthase">
    <location>
        <begin position="1"/>
        <end position="274"/>
    </location>
</feature>
<feature type="active site" description="Schiff-base intermediate with DXP" evidence="1">
    <location>
        <position position="111"/>
    </location>
</feature>
<feature type="binding site" evidence="1">
    <location>
        <position position="172"/>
    </location>
    <ligand>
        <name>1-deoxy-D-xylulose 5-phosphate</name>
        <dbReference type="ChEBI" id="CHEBI:57792"/>
    </ligand>
</feature>
<feature type="binding site" evidence="1">
    <location>
        <begin position="198"/>
        <end position="199"/>
    </location>
    <ligand>
        <name>1-deoxy-D-xylulose 5-phosphate</name>
        <dbReference type="ChEBI" id="CHEBI:57792"/>
    </ligand>
</feature>
<feature type="binding site" evidence="1">
    <location>
        <begin position="220"/>
        <end position="221"/>
    </location>
    <ligand>
        <name>1-deoxy-D-xylulose 5-phosphate</name>
        <dbReference type="ChEBI" id="CHEBI:57792"/>
    </ligand>
</feature>
<proteinExistence type="inferred from homology"/>
<sequence>MIQTQSPPDALQIANRSFRSRLMTGTGKYRSFEVMRAAVAASGSEIVTVAVRRVQEGVPGHGGLGQELNWQKLWMLPNTAGAKSAEEAVRYAHFGREMAKILGQEDNHWVKLEVIPETKYLLPDPLGTLQAAETLIKQGFTVLPYINADFHLARRLWEMGCATVMPLGSPIGSGQGLQNAAAIALIIAESPVPVVVDAGIRTPSEACRAMEMGAAALLINTAIAQAEEPIAMGRAMGLATEAGRLAHQAGAIPVKTYASASSPLTGLVGSAVGS</sequence>
<accession>Q7NJM5</accession>
<protein>
    <recommendedName>
        <fullName evidence="1">Thiazole synthase</fullName>
        <ecNumber evidence="1">2.8.1.10</ecNumber>
    </recommendedName>
</protein>
<reference key="1">
    <citation type="journal article" date="2003" name="DNA Res.">
        <title>Complete genome structure of Gloeobacter violaceus PCC 7421, a cyanobacterium that lacks thylakoids.</title>
        <authorList>
            <person name="Nakamura Y."/>
            <person name="Kaneko T."/>
            <person name="Sato S."/>
            <person name="Mimuro M."/>
            <person name="Miyashita H."/>
            <person name="Tsuchiya T."/>
            <person name="Sasamoto S."/>
            <person name="Watanabe A."/>
            <person name="Kawashima K."/>
            <person name="Kishida Y."/>
            <person name="Kiyokawa C."/>
            <person name="Kohara M."/>
            <person name="Matsumoto M."/>
            <person name="Matsuno A."/>
            <person name="Nakazaki N."/>
            <person name="Shimpo S."/>
            <person name="Takeuchi C."/>
            <person name="Yamada M."/>
            <person name="Tabata S."/>
        </authorList>
    </citation>
    <scope>NUCLEOTIDE SEQUENCE [LARGE SCALE GENOMIC DNA]</scope>
    <source>
        <strain>ATCC 29082 / PCC 7421</strain>
    </source>
</reference>
<comment type="function">
    <text evidence="1">Catalyzes the rearrangement of 1-deoxy-D-xylulose 5-phosphate (DXP) to produce the thiazole phosphate moiety of thiamine. Sulfur is provided by the thiocarboxylate moiety of the carrier protein ThiS. In vitro, sulfur can be provided by H(2)S.</text>
</comment>
<comment type="catalytic activity">
    <reaction evidence="1">
        <text>[ThiS sulfur-carrier protein]-C-terminal-Gly-aminoethanethioate + 2-iminoacetate + 1-deoxy-D-xylulose 5-phosphate = [ThiS sulfur-carrier protein]-C-terminal Gly-Gly + 2-[(2R,5Z)-2-carboxy-4-methylthiazol-5(2H)-ylidene]ethyl phosphate + 2 H2O + H(+)</text>
        <dbReference type="Rhea" id="RHEA:26297"/>
        <dbReference type="Rhea" id="RHEA-COMP:12909"/>
        <dbReference type="Rhea" id="RHEA-COMP:19908"/>
        <dbReference type="ChEBI" id="CHEBI:15377"/>
        <dbReference type="ChEBI" id="CHEBI:15378"/>
        <dbReference type="ChEBI" id="CHEBI:57792"/>
        <dbReference type="ChEBI" id="CHEBI:62899"/>
        <dbReference type="ChEBI" id="CHEBI:77846"/>
        <dbReference type="ChEBI" id="CHEBI:90778"/>
        <dbReference type="ChEBI" id="CHEBI:232372"/>
        <dbReference type="EC" id="2.8.1.10"/>
    </reaction>
</comment>
<comment type="pathway">
    <text evidence="1">Cofactor biosynthesis; thiamine diphosphate biosynthesis.</text>
</comment>
<comment type="subunit">
    <text evidence="1">Homotetramer. Forms heterodimers with either ThiH or ThiS.</text>
</comment>
<comment type="subcellular location">
    <subcellularLocation>
        <location evidence="1">Cytoplasm</location>
    </subcellularLocation>
</comment>
<comment type="similarity">
    <text evidence="1">Belongs to the ThiG family.</text>
</comment>
<organism>
    <name type="scientific">Gloeobacter violaceus (strain ATCC 29082 / PCC 7421)</name>
    <dbReference type="NCBI Taxonomy" id="251221"/>
    <lineage>
        <taxon>Bacteria</taxon>
        <taxon>Bacillati</taxon>
        <taxon>Cyanobacteriota</taxon>
        <taxon>Cyanophyceae</taxon>
        <taxon>Gloeobacterales</taxon>
        <taxon>Gloeobacteraceae</taxon>
        <taxon>Gloeobacter</taxon>
    </lineage>
</organism>